<gene>
    <name type="primary">LYS2</name>
    <name type="ordered locus">CAGL0K07788g</name>
</gene>
<sequence length="1374" mass="152537">MSWKERLDNPTLSVWPHDYLRPHAEPFVEQGTYSISIPQLSGDYATLLAAWTALLYRVTGDDDIVLYVRDNKVLRFTITPELTFTQLQNKINEQLAELANVEGTNFDALSESLQKESGLERPPQLFRIACVTEDLQLDRYTHSPLDIGLQLHESSSDVSIVFNKLLFSQDRITILADQLTLFLTSVLQNAKQVFTKVSLITDSSTSILPDPKANLDWCGFVGCIHDIFQDNAEKFPERTCVVETPPINSTKTRTFTYKDINEASNIVAHYLINTGIKRGDVVMIYSSRGVDLMVCVMGVLKAGATFSVIDPAYPPARQTIYLGVAKPKGLIVIRAAGQLDQLVEDYITKELDLVSRIPSIAIQDNGTVEGGSLPSESGDVLASYTELKSTRTGVVVGPDSNPTLSFTSGSEGIPKGVLGRHFSLAYYFSWMAKQFNLSENDKFTMLSGIAHDPIQRDMFTPLFLGAQLYVPTQDDIGTPGRLAEWMGKYGCTVTHLTPAMGQLLTAQAVTPFPKLHHAFFVGDILTKRDCLRLQTLAENCCIVNMYGTTETQRAVSYFEVTSRSQDPHFLKKLKDVMPAGRGMKNVQLLVVNRNDRTQVCGVGEIGEIYVRAGGLAEGYRGLPDLNKEKFVNNWFVEEGHWNYLDKDLEAPWKEFWQGPRDRLYRTGDLGRYLPNGDCECCGRADDQVKIRGFRIELGEIDTNISQHPLVRENITLVRNNLEGEKCLVTYMVPRFDKPELENFKIEVPSNISDDPVVCGLIGYSPFTKDLKAFLKKRLASYAIPSLIIVLPKLPLNPNGKVDKPKLQFPTVKQLELVAKNSSIDINDSEFNQQEREIRDLWLECLPTKPTSISPEDSFFDLGGHSILATKMIFTVKKQLNVELPLGTIFKYPTIKAFAAEVSRLKSTDKIEEETTALTADYASDAASLIDTLPKSYPAARALGSPSEMAGPTTVNIFVTGVTGFLGSFILSDILNRTVTGVNFKIFAHVRAADETSGLDRIRKAGTVYGTWKEEYANSLQVVIGDLSKKNFGLTDDKWSHLSETIDIIIHNGALVHWVYPYSKLRNANVVSTINIMNLASEGKPKLFNFVSSTSVLDTNHYFELSDKLQQSGKEGIPESDDLMGSSLGLTSGYGQSKWAAEHIIRAAGKRGLRGSIIRPGYVTGASYNGSSNTDDFLLRFLKSAVQLGKIPDINNTVNMVPVDQVARVVVAASINPPCGDDLCVVHVNAHPRIIFKDYLYELKNYGYDVEIENYEQWKKTLEEAVIERSEDNALFPLLHMVLGDLEDSTKAPELDDKNAITSLRADIEWTNEDRTKGMGATPEQIGIYISFLESVGFLPHPKHFGDKALPNIKISEQQKELVASGAGARSSSAA</sequence>
<evidence type="ECO:0000250" key="1"/>
<evidence type="ECO:0000250" key="2">
    <source>
        <dbReference type="UniProtKB" id="P07702"/>
    </source>
</evidence>
<evidence type="ECO:0000255" key="3">
    <source>
        <dbReference type="PROSITE-ProRule" id="PRU00258"/>
    </source>
</evidence>
<evidence type="ECO:0000305" key="4"/>
<keyword id="KW-0028">Amino-acid biosynthesis</keyword>
<keyword id="KW-0457">Lysine biosynthesis</keyword>
<keyword id="KW-0521">NADP</keyword>
<keyword id="KW-0560">Oxidoreductase</keyword>
<keyword id="KW-0596">Phosphopantetheine</keyword>
<keyword id="KW-0597">Phosphoprotein</keyword>
<keyword id="KW-1185">Reference proteome</keyword>
<proteinExistence type="inferred from homology"/>
<accession>Q6FMI5</accession>
<reference key="1">
    <citation type="journal article" date="2004" name="Nature">
        <title>Genome evolution in yeasts.</title>
        <authorList>
            <person name="Dujon B."/>
            <person name="Sherman D."/>
            <person name="Fischer G."/>
            <person name="Durrens P."/>
            <person name="Casaregola S."/>
            <person name="Lafontaine I."/>
            <person name="de Montigny J."/>
            <person name="Marck C."/>
            <person name="Neuveglise C."/>
            <person name="Talla E."/>
            <person name="Goffard N."/>
            <person name="Frangeul L."/>
            <person name="Aigle M."/>
            <person name="Anthouard V."/>
            <person name="Babour A."/>
            <person name="Barbe V."/>
            <person name="Barnay S."/>
            <person name="Blanchin S."/>
            <person name="Beckerich J.-M."/>
            <person name="Beyne E."/>
            <person name="Bleykasten C."/>
            <person name="Boisrame A."/>
            <person name="Boyer J."/>
            <person name="Cattolico L."/>
            <person name="Confanioleri F."/>
            <person name="de Daruvar A."/>
            <person name="Despons L."/>
            <person name="Fabre E."/>
            <person name="Fairhead C."/>
            <person name="Ferry-Dumazet H."/>
            <person name="Groppi A."/>
            <person name="Hantraye F."/>
            <person name="Hennequin C."/>
            <person name="Jauniaux N."/>
            <person name="Joyet P."/>
            <person name="Kachouri R."/>
            <person name="Kerrest A."/>
            <person name="Koszul R."/>
            <person name="Lemaire M."/>
            <person name="Lesur I."/>
            <person name="Ma L."/>
            <person name="Muller H."/>
            <person name="Nicaud J.-M."/>
            <person name="Nikolski M."/>
            <person name="Oztas S."/>
            <person name="Ozier-Kalogeropoulos O."/>
            <person name="Pellenz S."/>
            <person name="Potier S."/>
            <person name="Richard G.-F."/>
            <person name="Straub M.-L."/>
            <person name="Suleau A."/>
            <person name="Swennen D."/>
            <person name="Tekaia F."/>
            <person name="Wesolowski-Louvel M."/>
            <person name="Westhof E."/>
            <person name="Wirth B."/>
            <person name="Zeniou-Meyer M."/>
            <person name="Zivanovic Y."/>
            <person name="Bolotin-Fukuhara M."/>
            <person name="Thierry A."/>
            <person name="Bouchier C."/>
            <person name="Caudron B."/>
            <person name="Scarpelli C."/>
            <person name="Gaillardin C."/>
            <person name="Weissenbach J."/>
            <person name="Wincker P."/>
            <person name="Souciet J.-L."/>
        </authorList>
    </citation>
    <scope>NUCLEOTIDE SEQUENCE [LARGE SCALE GENOMIC DNA]</scope>
    <source>
        <strain>ATCC 2001 / BCRC 20586 / JCM 3761 / NBRC 0622 / NRRL Y-65 / CBS 138</strain>
    </source>
</reference>
<feature type="chain" id="PRO_0000193150" description="L-2-aminoadipate reductase large subunit">
    <location>
        <begin position="1"/>
        <end position="1374"/>
    </location>
</feature>
<feature type="domain" description="Carrier" evidence="3">
    <location>
        <begin position="828"/>
        <end position="905"/>
    </location>
</feature>
<feature type="modified residue" description="O-(pantetheine 4'-phosphoryl)serine" evidence="3">
    <location>
        <position position="865"/>
    </location>
</feature>
<dbReference type="EC" id="1.2.1.31" evidence="2"/>
<dbReference type="EC" id="1.2.1.95" evidence="2"/>
<dbReference type="EMBL" id="CR380957">
    <property type="protein sequence ID" value="CAG61522.1"/>
    <property type="molecule type" value="Genomic_DNA"/>
</dbReference>
<dbReference type="RefSeq" id="XP_448559.1">
    <property type="nucleotide sequence ID" value="XM_448559.1"/>
</dbReference>
<dbReference type="SMR" id="Q6FMI5"/>
<dbReference type="FunCoup" id="Q6FMI5">
    <property type="interactions" value="769"/>
</dbReference>
<dbReference type="STRING" id="284593.Q6FMI5"/>
<dbReference type="EnsemblFungi" id="CAGL0K07788g-T">
    <property type="protein sequence ID" value="CAGL0K07788g-T-p1"/>
    <property type="gene ID" value="CAGL0K07788g"/>
</dbReference>
<dbReference type="KEGG" id="cgr:2890361"/>
<dbReference type="CGD" id="CAL0133971">
    <property type="gene designation" value="CAGL0K07788g"/>
</dbReference>
<dbReference type="VEuPathDB" id="FungiDB:CAGL0K07788g"/>
<dbReference type="eggNOG" id="KOG1178">
    <property type="taxonomic scope" value="Eukaryota"/>
</dbReference>
<dbReference type="HOGENOM" id="CLU_000022_19_1_1"/>
<dbReference type="InParanoid" id="Q6FMI5"/>
<dbReference type="OMA" id="ENDKFTM"/>
<dbReference type="UniPathway" id="UPA00033">
    <property type="reaction ID" value="UER00032"/>
</dbReference>
<dbReference type="Proteomes" id="UP000002428">
    <property type="component" value="Chromosome K"/>
</dbReference>
<dbReference type="GO" id="GO:0004043">
    <property type="term" value="F:L-aminoadipate-semialdehyde dehydrogenase activity"/>
    <property type="evidence" value="ECO:0007669"/>
    <property type="project" value="UniProtKB-EC"/>
</dbReference>
<dbReference type="GO" id="GO:0031177">
    <property type="term" value="F:phosphopantetheine binding"/>
    <property type="evidence" value="ECO:0007669"/>
    <property type="project" value="InterPro"/>
</dbReference>
<dbReference type="GO" id="GO:0019878">
    <property type="term" value="P:lysine biosynthetic process via aminoadipic acid"/>
    <property type="evidence" value="ECO:0007669"/>
    <property type="project" value="UniProtKB-UniPathway"/>
</dbReference>
<dbReference type="CDD" id="cd17647">
    <property type="entry name" value="A_NRPS_alphaAR"/>
    <property type="match status" value="1"/>
</dbReference>
<dbReference type="CDD" id="cd05235">
    <property type="entry name" value="SDR_e1"/>
    <property type="match status" value="1"/>
</dbReference>
<dbReference type="FunFam" id="3.40.50.12780:FF:000046">
    <property type="entry name" value="L-2-aminoadipate reductase"/>
    <property type="match status" value="1"/>
</dbReference>
<dbReference type="FunFam" id="3.40.50.720:FF:000787">
    <property type="entry name" value="L-2-aminoadipate reductase"/>
    <property type="match status" value="1"/>
</dbReference>
<dbReference type="Gene3D" id="3.30.300.30">
    <property type="match status" value="1"/>
</dbReference>
<dbReference type="Gene3D" id="1.10.1200.10">
    <property type="entry name" value="ACP-like"/>
    <property type="match status" value="1"/>
</dbReference>
<dbReference type="Gene3D" id="3.40.50.12780">
    <property type="entry name" value="N-terminal domain of ligase-like"/>
    <property type="match status" value="1"/>
</dbReference>
<dbReference type="Gene3D" id="3.40.50.720">
    <property type="entry name" value="NAD(P)-binding Rossmann-like Domain"/>
    <property type="match status" value="1"/>
</dbReference>
<dbReference type="Gene3D" id="3.30.559.30">
    <property type="entry name" value="Nonribosomal peptide synthetase, condensation domain"/>
    <property type="match status" value="1"/>
</dbReference>
<dbReference type="InterPro" id="IPR010071">
    <property type="entry name" value="AA_adenyl_dom"/>
</dbReference>
<dbReference type="InterPro" id="IPR036736">
    <property type="entry name" value="ACP-like_sf"/>
</dbReference>
<dbReference type="InterPro" id="IPR045851">
    <property type="entry name" value="AMP-bd_C_sf"/>
</dbReference>
<dbReference type="InterPro" id="IPR020845">
    <property type="entry name" value="AMP-binding_CS"/>
</dbReference>
<dbReference type="InterPro" id="IPR000873">
    <property type="entry name" value="AMP-dep_synth/lig_dom"/>
</dbReference>
<dbReference type="InterPro" id="IPR042099">
    <property type="entry name" value="ANL_N_sf"/>
</dbReference>
<dbReference type="InterPro" id="IPR013120">
    <property type="entry name" value="Far_NAD-bd"/>
</dbReference>
<dbReference type="InterPro" id="IPR014397">
    <property type="entry name" value="Lys2"/>
</dbReference>
<dbReference type="InterPro" id="IPR036291">
    <property type="entry name" value="NAD(P)-bd_dom_sf"/>
</dbReference>
<dbReference type="InterPro" id="IPR020806">
    <property type="entry name" value="PKS_PP-bd"/>
</dbReference>
<dbReference type="InterPro" id="IPR009081">
    <property type="entry name" value="PP-bd_ACP"/>
</dbReference>
<dbReference type="InterPro" id="IPR006162">
    <property type="entry name" value="Ppantetheine_attach_site"/>
</dbReference>
<dbReference type="InterPro" id="IPR010080">
    <property type="entry name" value="Thioester_reductase-like_dom"/>
</dbReference>
<dbReference type="NCBIfam" id="TIGR01733">
    <property type="entry name" value="AA-adenyl-dom"/>
    <property type="match status" value="1"/>
</dbReference>
<dbReference type="NCBIfam" id="TIGR03443">
    <property type="entry name" value="alpha_am_amid"/>
    <property type="match status" value="1"/>
</dbReference>
<dbReference type="NCBIfam" id="TIGR01746">
    <property type="entry name" value="Thioester-redct"/>
    <property type="match status" value="1"/>
</dbReference>
<dbReference type="PANTHER" id="PTHR44845">
    <property type="entry name" value="CARRIER DOMAIN-CONTAINING PROTEIN"/>
    <property type="match status" value="1"/>
</dbReference>
<dbReference type="PANTHER" id="PTHR44845:SF1">
    <property type="entry name" value="L-2-AMINOADIPATE REDUCTASE"/>
    <property type="match status" value="1"/>
</dbReference>
<dbReference type="Pfam" id="PF00501">
    <property type="entry name" value="AMP-binding"/>
    <property type="match status" value="1"/>
</dbReference>
<dbReference type="Pfam" id="PF07993">
    <property type="entry name" value="NAD_binding_4"/>
    <property type="match status" value="1"/>
</dbReference>
<dbReference type="Pfam" id="PF00550">
    <property type="entry name" value="PP-binding"/>
    <property type="match status" value="1"/>
</dbReference>
<dbReference type="PIRSF" id="PIRSF001617">
    <property type="entry name" value="Alpha-AR"/>
    <property type="match status" value="1"/>
</dbReference>
<dbReference type="SMART" id="SM00823">
    <property type="entry name" value="PKS_PP"/>
    <property type="match status" value="1"/>
</dbReference>
<dbReference type="SMART" id="SM01294">
    <property type="entry name" value="PKS_PP_betabranch"/>
    <property type="match status" value="1"/>
</dbReference>
<dbReference type="SUPFAM" id="SSF56801">
    <property type="entry name" value="Acetyl-CoA synthetase-like"/>
    <property type="match status" value="1"/>
</dbReference>
<dbReference type="SUPFAM" id="SSF47336">
    <property type="entry name" value="ACP-like"/>
    <property type="match status" value="1"/>
</dbReference>
<dbReference type="SUPFAM" id="SSF52777">
    <property type="entry name" value="CoA-dependent acyltransferases"/>
    <property type="match status" value="1"/>
</dbReference>
<dbReference type="SUPFAM" id="SSF51735">
    <property type="entry name" value="NAD(P)-binding Rossmann-fold domains"/>
    <property type="match status" value="1"/>
</dbReference>
<dbReference type="PROSITE" id="PS00455">
    <property type="entry name" value="AMP_BINDING"/>
    <property type="match status" value="1"/>
</dbReference>
<dbReference type="PROSITE" id="PS50075">
    <property type="entry name" value="CARRIER"/>
    <property type="match status" value="1"/>
</dbReference>
<dbReference type="PROSITE" id="PS00012">
    <property type="entry name" value="PHOSPHOPANTETHEINE"/>
    <property type="match status" value="1"/>
</dbReference>
<name>LYS2_CANGA</name>
<comment type="function">
    <text evidence="2">Catalyzes the activation of alpha-aminoadipate by ATP-dependent adenylation and the reduction of activated alpha-aminoadipate by NADPH. The activated alpha-aminoadipate is bound to the phosphopantheinyl group of the enzyme itself before it is reduced to (S)-2-amino-6-oxohexanoate.</text>
</comment>
<comment type="catalytic activity">
    <reaction evidence="2">
        <text>(S)-2-amino-6-oxohexanoate + NADP(+) + H2O = L-2-aminoadipate + NADPH + 2 H(+)</text>
        <dbReference type="Rhea" id="RHEA:12304"/>
        <dbReference type="ChEBI" id="CHEBI:15377"/>
        <dbReference type="ChEBI" id="CHEBI:15378"/>
        <dbReference type="ChEBI" id="CHEBI:57783"/>
        <dbReference type="ChEBI" id="CHEBI:58321"/>
        <dbReference type="ChEBI" id="CHEBI:58349"/>
        <dbReference type="ChEBI" id="CHEBI:58672"/>
        <dbReference type="EC" id="1.2.1.31"/>
    </reaction>
</comment>
<comment type="catalytic activity">
    <reaction evidence="2">
        <text>(S)-2-amino-6-oxohexanoate + NAD(+) + H2O = L-2-aminoadipate + NADH + 2 H(+)</text>
        <dbReference type="Rhea" id="RHEA:12308"/>
        <dbReference type="ChEBI" id="CHEBI:15377"/>
        <dbReference type="ChEBI" id="CHEBI:15378"/>
        <dbReference type="ChEBI" id="CHEBI:57540"/>
        <dbReference type="ChEBI" id="CHEBI:57945"/>
        <dbReference type="ChEBI" id="CHEBI:58321"/>
        <dbReference type="ChEBI" id="CHEBI:58672"/>
        <dbReference type="EC" id="1.2.1.31"/>
    </reaction>
</comment>
<comment type="catalytic activity">
    <reaction evidence="2">
        <text>(S)-2-amino-6-oxohexanoate + AMP + diphosphate + NADP(+) = L-2-aminoadipate + ATP + NADPH + H(+)</text>
        <dbReference type="Rhea" id="RHEA:46936"/>
        <dbReference type="ChEBI" id="CHEBI:15378"/>
        <dbReference type="ChEBI" id="CHEBI:30616"/>
        <dbReference type="ChEBI" id="CHEBI:33019"/>
        <dbReference type="ChEBI" id="CHEBI:57783"/>
        <dbReference type="ChEBI" id="CHEBI:58321"/>
        <dbReference type="ChEBI" id="CHEBI:58349"/>
        <dbReference type="ChEBI" id="CHEBI:58672"/>
        <dbReference type="ChEBI" id="CHEBI:456215"/>
        <dbReference type="EC" id="1.2.1.95"/>
    </reaction>
</comment>
<comment type="cofactor">
    <cofactor evidence="2">
        <name>pantetheine 4'-phosphate</name>
        <dbReference type="ChEBI" id="CHEBI:47942"/>
    </cofactor>
    <text evidence="2">Binds 1 phosphopantetheine covalently.</text>
</comment>
<comment type="pathway">
    <text>Amino-acid biosynthesis; L-lysine biosynthesis via AAA pathway; L-lysine from L-alpha-aminoadipate (fungal route): step 1/3.</text>
</comment>
<comment type="subunit">
    <text evidence="1">Heterodimer of an alpha and a beta subunit.</text>
</comment>
<comment type="similarity">
    <text evidence="4">Belongs to the ATP-dependent AMP-binding enzyme family.</text>
</comment>
<protein>
    <recommendedName>
        <fullName>L-2-aminoadipate reductase large subunit</fullName>
        <ecNumber evidence="2">1.2.1.31</ecNumber>
        <ecNumber evidence="2">1.2.1.95</ecNumber>
    </recommendedName>
    <alternativeName>
        <fullName>Alpha-aminoadipate reductase</fullName>
        <shortName>Alpha-AR</shortName>
    </alternativeName>
    <alternativeName>
        <fullName>L-aminoadipate-semialdehyde dehydrogenase</fullName>
    </alternativeName>
</protein>
<organism>
    <name type="scientific">Candida glabrata (strain ATCC 2001 / BCRC 20586 / JCM 3761 / NBRC 0622 / NRRL Y-65 / CBS 138)</name>
    <name type="common">Yeast</name>
    <name type="synonym">Nakaseomyces glabratus</name>
    <dbReference type="NCBI Taxonomy" id="284593"/>
    <lineage>
        <taxon>Eukaryota</taxon>
        <taxon>Fungi</taxon>
        <taxon>Dikarya</taxon>
        <taxon>Ascomycota</taxon>
        <taxon>Saccharomycotina</taxon>
        <taxon>Saccharomycetes</taxon>
        <taxon>Saccharomycetales</taxon>
        <taxon>Saccharomycetaceae</taxon>
        <taxon>Nakaseomyces</taxon>
    </lineage>
</organism>